<organism>
    <name type="scientific">Streptomyces coelicolor (strain ATCC BAA-471 / A3(2) / M145)</name>
    <dbReference type="NCBI Taxonomy" id="100226"/>
    <lineage>
        <taxon>Bacteria</taxon>
        <taxon>Bacillati</taxon>
        <taxon>Actinomycetota</taxon>
        <taxon>Actinomycetes</taxon>
        <taxon>Kitasatosporales</taxon>
        <taxon>Streptomycetaceae</taxon>
        <taxon>Streptomyces</taxon>
        <taxon>Streptomyces albidoflavus group</taxon>
    </lineage>
</organism>
<gene>
    <name evidence="1" type="primary">nuoI2</name>
    <name type="ordered locus">SCO4603</name>
    <name type="ORF">SCD39.03</name>
</gene>
<proteinExistence type="inferred from homology"/>
<name>NUOI2_STRCO</name>
<evidence type="ECO:0000255" key="1">
    <source>
        <dbReference type="HAMAP-Rule" id="MF_01351"/>
    </source>
</evidence>
<evidence type="ECO:0000256" key="2">
    <source>
        <dbReference type="SAM" id="MobiDB-lite"/>
    </source>
</evidence>
<reference key="1">
    <citation type="journal article" date="2002" name="Nature">
        <title>Complete genome sequence of the model actinomycete Streptomyces coelicolor A3(2).</title>
        <authorList>
            <person name="Bentley S.D."/>
            <person name="Chater K.F."/>
            <person name="Cerdeno-Tarraga A.-M."/>
            <person name="Challis G.L."/>
            <person name="Thomson N.R."/>
            <person name="James K.D."/>
            <person name="Harris D.E."/>
            <person name="Quail M.A."/>
            <person name="Kieser H."/>
            <person name="Harper D."/>
            <person name="Bateman A."/>
            <person name="Brown S."/>
            <person name="Chandra G."/>
            <person name="Chen C.W."/>
            <person name="Collins M."/>
            <person name="Cronin A."/>
            <person name="Fraser A."/>
            <person name="Goble A."/>
            <person name="Hidalgo J."/>
            <person name="Hornsby T."/>
            <person name="Howarth S."/>
            <person name="Huang C.-H."/>
            <person name="Kieser T."/>
            <person name="Larke L."/>
            <person name="Murphy L.D."/>
            <person name="Oliver K."/>
            <person name="O'Neil S."/>
            <person name="Rabbinowitsch E."/>
            <person name="Rajandream M.A."/>
            <person name="Rutherford K.M."/>
            <person name="Rutter S."/>
            <person name="Seeger K."/>
            <person name="Saunders D."/>
            <person name="Sharp S."/>
            <person name="Squares R."/>
            <person name="Squares S."/>
            <person name="Taylor K."/>
            <person name="Warren T."/>
            <person name="Wietzorrek A."/>
            <person name="Woodward J.R."/>
            <person name="Barrell B.G."/>
            <person name="Parkhill J."/>
            <person name="Hopwood D.A."/>
        </authorList>
    </citation>
    <scope>NUCLEOTIDE SEQUENCE [LARGE SCALE GENOMIC DNA]</scope>
    <source>
        <strain>ATCC BAA-471 / A3(2) / M145</strain>
    </source>
</reference>
<comment type="function">
    <text evidence="1">NDH-1 shuttles electrons from NADH, via FMN and iron-sulfur (Fe-S) centers, to quinones in the respiratory chain. The immediate electron acceptor for the enzyme in this species is believed to be ubiquinone. Couples the redox reaction to proton translocation (for every two electrons transferred, four hydrogen ions are translocated across the cytoplasmic membrane), and thus conserves the redox energy in a proton gradient.</text>
</comment>
<comment type="catalytic activity">
    <reaction evidence="1">
        <text>a quinone + NADH + 5 H(+)(in) = a quinol + NAD(+) + 4 H(+)(out)</text>
        <dbReference type="Rhea" id="RHEA:57888"/>
        <dbReference type="ChEBI" id="CHEBI:15378"/>
        <dbReference type="ChEBI" id="CHEBI:24646"/>
        <dbReference type="ChEBI" id="CHEBI:57540"/>
        <dbReference type="ChEBI" id="CHEBI:57945"/>
        <dbReference type="ChEBI" id="CHEBI:132124"/>
    </reaction>
</comment>
<comment type="cofactor">
    <cofactor evidence="1">
        <name>[4Fe-4S] cluster</name>
        <dbReference type="ChEBI" id="CHEBI:49883"/>
    </cofactor>
    <text evidence="1">Binds 2 [4Fe-4S] clusters per subunit.</text>
</comment>
<comment type="subunit">
    <text evidence="1">NDH-1 is composed of 14 different subunits. Subunits NuoA, H, J, K, L, M, N constitute the membrane sector of the complex.</text>
</comment>
<comment type="subcellular location">
    <subcellularLocation>
        <location evidence="1">Cell membrane</location>
        <topology evidence="1">Peripheral membrane protein</topology>
    </subcellularLocation>
</comment>
<comment type="similarity">
    <text evidence="1">Belongs to the complex I 23 kDa subunit family.</text>
</comment>
<accession>Q9F2V8</accession>
<sequence>MAPVPGSGLAKGLAVTLRTMTRKTVTEQYPDAQPELPPRTRGVIGLFEENCTVCMLCARECPDWCIYIDSHKETVPAATPGGRDRSRNVLDRFAIDFALCMYCGICIEVCPFDALFWSPEFEYAETDIRDLTHERDKLREWMWTVPAPPALDPGAEEPKELAAARKAADKLAAQQQPDQPGPDHPGQPDESGQEGRT</sequence>
<feature type="chain" id="PRO_0000250946" description="NADH-quinone oxidoreductase subunit I 2">
    <location>
        <begin position="1"/>
        <end position="197"/>
    </location>
</feature>
<feature type="domain" description="4Fe-4S ferredoxin-type 1" evidence="1">
    <location>
        <begin position="42"/>
        <end position="71"/>
    </location>
</feature>
<feature type="domain" description="4Fe-4S ferredoxin-type 2" evidence="1">
    <location>
        <begin position="91"/>
        <end position="120"/>
    </location>
</feature>
<feature type="region of interest" description="Disordered" evidence="2">
    <location>
        <begin position="147"/>
        <end position="197"/>
    </location>
</feature>
<feature type="compositionally biased region" description="Basic and acidic residues" evidence="2">
    <location>
        <begin position="156"/>
        <end position="169"/>
    </location>
</feature>
<feature type="binding site" evidence="1">
    <location>
        <position position="51"/>
    </location>
    <ligand>
        <name>[4Fe-4S] cluster</name>
        <dbReference type="ChEBI" id="CHEBI:49883"/>
        <label>1</label>
    </ligand>
</feature>
<feature type="binding site" evidence="1">
    <location>
        <position position="54"/>
    </location>
    <ligand>
        <name>[4Fe-4S] cluster</name>
        <dbReference type="ChEBI" id="CHEBI:49883"/>
        <label>1</label>
    </ligand>
</feature>
<feature type="binding site" evidence="1">
    <location>
        <position position="57"/>
    </location>
    <ligand>
        <name>[4Fe-4S] cluster</name>
        <dbReference type="ChEBI" id="CHEBI:49883"/>
        <label>1</label>
    </ligand>
</feature>
<feature type="binding site" evidence="1">
    <location>
        <position position="61"/>
    </location>
    <ligand>
        <name>[4Fe-4S] cluster</name>
        <dbReference type="ChEBI" id="CHEBI:49883"/>
        <label>2</label>
    </ligand>
</feature>
<feature type="binding site" evidence="1">
    <location>
        <position position="100"/>
    </location>
    <ligand>
        <name>[4Fe-4S] cluster</name>
        <dbReference type="ChEBI" id="CHEBI:49883"/>
        <label>2</label>
    </ligand>
</feature>
<feature type="binding site" evidence="1">
    <location>
        <position position="103"/>
    </location>
    <ligand>
        <name>[4Fe-4S] cluster</name>
        <dbReference type="ChEBI" id="CHEBI:49883"/>
        <label>2</label>
    </ligand>
</feature>
<feature type="binding site" evidence="1">
    <location>
        <position position="106"/>
    </location>
    <ligand>
        <name>[4Fe-4S] cluster</name>
        <dbReference type="ChEBI" id="CHEBI:49883"/>
        <label>2</label>
    </ligand>
</feature>
<feature type="binding site" evidence="1">
    <location>
        <position position="110"/>
    </location>
    <ligand>
        <name>[4Fe-4S] cluster</name>
        <dbReference type="ChEBI" id="CHEBI:49883"/>
        <label>1</label>
    </ligand>
</feature>
<protein>
    <recommendedName>
        <fullName evidence="1">NADH-quinone oxidoreductase subunit I 2</fullName>
        <ecNumber evidence="1">7.1.1.-</ecNumber>
    </recommendedName>
    <alternativeName>
        <fullName evidence="1">NADH dehydrogenase I subunit I 2</fullName>
    </alternativeName>
    <alternativeName>
        <fullName evidence="1">NDH-1 subunit I 2</fullName>
    </alternativeName>
</protein>
<dbReference type="EC" id="7.1.1.-" evidence="1"/>
<dbReference type="EMBL" id="AL939120">
    <property type="protein sequence ID" value="CAC08256.1"/>
    <property type="molecule type" value="Genomic_DNA"/>
</dbReference>
<dbReference type="RefSeq" id="NP_628765.1">
    <property type="nucleotide sequence ID" value="NC_003888.3"/>
</dbReference>
<dbReference type="RefSeq" id="WP_003974344.1">
    <property type="nucleotide sequence ID" value="NZ_VNID01000028.1"/>
</dbReference>
<dbReference type="SMR" id="Q9F2V8"/>
<dbReference type="STRING" id="100226.gene:17762248"/>
<dbReference type="PaxDb" id="100226-SCO4603"/>
<dbReference type="KEGG" id="sco:SCO4603"/>
<dbReference type="PATRIC" id="fig|100226.15.peg.4675"/>
<dbReference type="eggNOG" id="COG1143">
    <property type="taxonomic scope" value="Bacteria"/>
</dbReference>
<dbReference type="HOGENOM" id="CLU_067218_4_2_11"/>
<dbReference type="InParanoid" id="Q9F2V8"/>
<dbReference type="OrthoDB" id="9808559at2"/>
<dbReference type="PhylomeDB" id="Q9F2V8"/>
<dbReference type="Proteomes" id="UP000001973">
    <property type="component" value="Chromosome"/>
</dbReference>
<dbReference type="GO" id="GO:0005886">
    <property type="term" value="C:plasma membrane"/>
    <property type="evidence" value="ECO:0007669"/>
    <property type="project" value="UniProtKB-SubCell"/>
</dbReference>
<dbReference type="GO" id="GO:0051539">
    <property type="term" value="F:4 iron, 4 sulfur cluster binding"/>
    <property type="evidence" value="ECO:0007669"/>
    <property type="project" value="UniProtKB-KW"/>
</dbReference>
<dbReference type="GO" id="GO:0005506">
    <property type="term" value="F:iron ion binding"/>
    <property type="evidence" value="ECO:0007669"/>
    <property type="project" value="UniProtKB-UniRule"/>
</dbReference>
<dbReference type="GO" id="GO:0050136">
    <property type="term" value="F:NADH:ubiquinone reductase (non-electrogenic) activity"/>
    <property type="evidence" value="ECO:0007669"/>
    <property type="project" value="UniProtKB-UniRule"/>
</dbReference>
<dbReference type="GO" id="GO:0048038">
    <property type="term" value="F:quinone binding"/>
    <property type="evidence" value="ECO:0007669"/>
    <property type="project" value="UniProtKB-KW"/>
</dbReference>
<dbReference type="FunFam" id="3.30.70.3270:FF:000012">
    <property type="entry name" value="NADH-quinone oxidoreductase subunit I"/>
    <property type="match status" value="1"/>
</dbReference>
<dbReference type="Gene3D" id="3.30.70.3270">
    <property type="match status" value="1"/>
</dbReference>
<dbReference type="HAMAP" id="MF_01351">
    <property type="entry name" value="NDH1_NuoI"/>
    <property type="match status" value="1"/>
</dbReference>
<dbReference type="InterPro" id="IPR017896">
    <property type="entry name" value="4Fe4S_Fe-S-bd"/>
</dbReference>
<dbReference type="InterPro" id="IPR017900">
    <property type="entry name" value="4Fe4S_Fe_S_CS"/>
</dbReference>
<dbReference type="InterPro" id="IPR010226">
    <property type="entry name" value="NADH_quinone_OxRdtase_chainI"/>
</dbReference>
<dbReference type="PANTHER" id="PTHR10849">
    <property type="entry name" value="NADH DEHYDROGENASE UBIQUINONE IRON-SULFUR PROTEIN 8, MITOCHONDRIAL"/>
    <property type="match status" value="1"/>
</dbReference>
<dbReference type="PANTHER" id="PTHR10849:SF24">
    <property type="entry name" value="NADH-QUINONE OXIDOREDUCTASE SUBUNIT I 2"/>
    <property type="match status" value="1"/>
</dbReference>
<dbReference type="Pfam" id="PF00037">
    <property type="entry name" value="Fer4"/>
    <property type="match status" value="1"/>
</dbReference>
<dbReference type="SUPFAM" id="SSF54862">
    <property type="entry name" value="4Fe-4S ferredoxins"/>
    <property type="match status" value="1"/>
</dbReference>
<dbReference type="PROSITE" id="PS00198">
    <property type="entry name" value="4FE4S_FER_1"/>
    <property type="match status" value="2"/>
</dbReference>
<dbReference type="PROSITE" id="PS51379">
    <property type="entry name" value="4FE4S_FER_2"/>
    <property type="match status" value="2"/>
</dbReference>
<keyword id="KW-0004">4Fe-4S</keyword>
<keyword id="KW-1003">Cell membrane</keyword>
<keyword id="KW-0408">Iron</keyword>
<keyword id="KW-0411">Iron-sulfur</keyword>
<keyword id="KW-0472">Membrane</keyword>
<keyword id="KW-0479">Metal-binding</keyword>
<keyword id="KW-0520">NAD</keyword>
<keyword id="KW-0874">Quinone</keyword>
<keyword id="KW-1185">Reference proteome</keyword>
<keyword id="KW-0677">Repeat</keyword>
<keyword id="KW-1278">Translocase</keyword>
<keyword id="KW-0830">Ubiquinone</keyword>